<sequence>MKKTPLLNIALSRVIASLGHGDILMIVDAGMPVPPGVELIDLALTRGVPDFVSVLDVVLSEMQVESHVLAREMADIKPPALQIIESLNLDDQLGQQRWISHEDLKALSRTAKAIIRTGECQPYSNLALVSGVVF</sequence>
<organism>
    <name type="scientific">Pseudomonas syringae pv. tomato (strain ATCC BAA-871 / DC3000)</name>
    <dbReference type="NCBI Taxonomy" id="223283"/>
    <lineage>
        <taxon>Bacteria</taxon>
        <taxon>Pseudomonadati</taxon>
        <taxon>Pseudomonadota</taxon>
        <taxon>Gammaproteobacteria</taxon>
        <taxon>Pseudomonadales</taxon>
        <taxon>Pseudomonadaceae</taxon>
        <taxon>Pseudomonas</taxon>
    </lineage>
</organism>
<accession>Q883I5</accession>
<proteinExistence type="inferred from homology"/>
<evidence type="ECO:0000255" key="1">
    <source>
        <dbReference type="HAMAP-Rule" id="MF_01661"/>
    </source>
</evidence>
<gene>
    <name evidence="1" type="primary">rbsD</name>
    <name type="ordered locus">PSPTO_2372</name>
</gene>
<keyword id="KW-0119">Carbohydrate metabolism</keyword>
<keyword id="KW-0963">Cytoplasm</keyword>
<keyword id="KW-0413">Isomerase</keyword>
<keyword id="KW-1185">Reference proteome</keyword>
<dbReference type="EC" id="5.4.99.62" evidence="1"/>
<dbReference type="EMBL" id="AE016853">
    <property type="protein sequence ID" value="AAO55883.1"/>
    <property type="molecule type" value="Genomic_DNA"/>
</dbReference>
<dbReference type="RefSeq" id="NP_792188.1">
    <property type="nucleotide sequence ID" value="NC_004578.1"/>
</dbReference>
<dbReference type="RefSeq" id="WP_005765637.1">
    <property type="nucleotide sequence ID" value="NC_004578.1"/>
</dbReference>
<dbReference type="SMR" id="Q883I5"/>
<dbReference type="STRING" id="223283.PSPTO_2372"/>
<dbReference type="GeneID" id="1184023"/>
<dbReference type="KEGG" id="pst:PSPTO_2372"/>
<dbReference type="PATRIC" id="fig|223283.9.peg.2407"/>
<dbReference type="eggNOG" id="COG1869">
    <property type="taxonomic scope" value="Bacteria"/>
</dbReference>
<dbReference type="HOGENOM" id="CLU_135498_0_0_6"/>
<dbReference type="OrthoDB" id="9805009at2"/>
<dbReference type="PhylomeDB" id="Q883I5"/>
<dbReference type="UniPathway" id="UPA00916">
    <property type="reaction ID" value="UER00888"/>
</dbReference>
<dbReference type="Proteomes" id="UP000002515">
    <property type="component" value="Chromosome"/>
</dbReference>
<dbReference type="GO" id="GO:0005829">
    <property type="term" value="C:cytosol"/>
    <property type="evidence" value="ECO:0007669"/>
    <property type="project" value="TreeGrafter"/>
</dbReference>
<dbReference type="GO" id="GO:0062193">
    <property type="term" value="F:D-ribose pyranase activity"/>
    <property type="evidence" value="ECO:0007669"/>
    <property type="project" value="UniProtKB-EC"/>
</dbReference>
<dbReference type="GO" id="GO:0016872">
    <property type="term" value="F:intramolecular lyase activity"/>
    <property type="evidence" value="ECO:0007669"/>
    <property type="project" value="UniProtKB-UniRule"/>
</dbReference>
<dbReference type="GO" id="GO:0048029">
    <property type="term" value="F:monosaccharide binding"/>
    <property type="evidence" value="ECO:0007669"/>
    <property type="project" value="InterPro"/>
</dbReference>
<dbReference type="GO" id="GO:0019303">
    <property type="term" value="P:D-ribose catabolic process"/>
    <property type="evidence" value="ECO:0007669"/>
    <property type="project" value="UniProtKB-UniRule"/>
</dbReference>
<dbReference type="FunFam" id="3.40.1650.10:FF:000004">
    <property type="entry name" value="D-ribose pyranase"/>
    <property type="match status" value="1"/>
</dbReference>
<dbReference type="Gene3D" id="3.40.1650.10">
    <property type="entry name" value="RbsD-like domain"/>
    <property type="match status" value="1"/>
</dbReference>
<dbReference type="HAMAP" id="MF_01661">
    <property type="entry name" value="D_rib_pyranase"/>
    <property type="match status" value="1"/>
</dbReference>
<dbReference type="InterPro" id="IPR023064">
    <property type="entry name" value="D-ribose_pyranase"/>
</dbReference>
<dbReference type="InterPro" id="IPR023750">
    <property type="entry name" value="RbsD-like_sf"/>
</dbReference>
<dbReference type="InterPro" id="IPR007721">
    <property type="entry name" value="RbsD_FucU"/>
</dbReference>
<dbReference type="NCBIfam" id="NF008761">
    <property type="entry name" value="PRK11797.1"/>
    <property type="match status" value="1"/>
</dbReference>
<dbReference type="PANTHER" id="PTHR37831">
    <property type="entry name" value="D-RIBOSE PYRANASE"/>
    <property type="match status" value="1"/>
</dbReference>
<dbReference type="PANTHER" id="PTHR37831:SF1">
    <property type="entry name" value="D-RIBOSE PYRANASE"/>
    <property type="match status" value="1"/>
</dbReference>
<dbReference type="Pfam" id="PF05025">
    <property type="entry name" value="RbsD_FucU"/>
    <property type="match status" value="1"/>
</dbReference>
<dbReference type="SUPFAM" id="SSF102546">
    <property type="entry name" value="RbsD-like"/>
    <property type="match status" value="1"/>
</dbReference>
<comment type="function">
    <text evidence="1">Catalyzes the interconversion of beta-pyran and beta-furan forms of D-ribose.</text>
</comment>
<comment type="catalytic activity">
    <reaction evidence="1">
        <text>beta-D-ribopyranose = beta-D-ribofuranose</text>
        <dbReference type="Rhea" id="RHEA:25432"/>
        <dbReference type="ChEBI" id="CHEBI:27476"/>
        <dbReference type="ChEBI" id="CHEBI:47002"/>
        <dbReference type="EC" id="5.4.99.62"/>
    </reaction>
</comment>
<comment type="pathway">
    <text evidence="1">Carbohydrate metabolism; D-ribose degradation; D-ribose 5-phosphate from beta-D-ribopyranose: step 1/2.</text>
</comment>
<comment type="subunit">
    <text evidence="1">Homodecamer.</text>
</comment>
<comment type="subcellular location">
    <subcellularLocation>
        <location evidence="1">Cytoplasm</location>
    </subcellularLocation>
</comment>
<comment type="similarity">
    <text evidence="1">Belongs to the RbsD / FucU family. RbsD subfamily.</text>
</comment>
<name>RBSD_PSESM</name>
<reference key="1">
    <citation type="journal article" date="2003" name="Proc. Natl. Acad. Sci. U.S.A.">
        <title>The complete genome sequence of the Arabidopsis and tomato pathogen Pseudomonas syringae pv. tomato DC3000.</title>
        <authorList>
            <person name="Buell C.R."/>
            <person name="Joardar V."/>
            <person name="Lindeberg M."/>
            <person name="Selengut J."/>
            <person name="Paulsen I.T."/>
            <person name="Gwinn M.L."/>
            <person name="Dodson R.J."/>
            <person name="DeBoy R.T."/>
            <person name="Durkin A.S."/>
            <person name="Kolonay J.F."/>
            <person name="Madupu R."/>
            <person name="Daugherty S.C."/>
            <person name="Brinkac L.M."/>
            <person name="Beanan M.J."/>
            <person name="Haft D.H."/>
            <person name="Nelson W.C."/>
            <person name="Davidsen T.M."/>
            <person name="Zafar N."/>
            <person name="Zhou L."/>
            <person name="Liu J."/>
            <person name="Yuan Q."/>
            <person name="Khouri H.M."/>
            <person name="Fedorova N.B."/>
            <person name="Tran B."/>
            <person name="Russell D."/>
            <person name="Berry K.J."/>
            <person name="Utterback T.R."/>
            <person name="Van Aken S.E."/>
            <person name="Feldblyum T.V."/>
            <person name="D'Ascenzo M."/>
            <person name="Deng W.-L."/>
            <person name="Ramos A.R."/>
            <person name="Alfano J.R."/>
            <person name="Cartinhour S."/>
            <person name="Chatterjee A.K."/>
            <person name="Delaney T.P."/>
            <person name="Lazarowitz S.G."/>
            <person name="Martin G.B."/>
            <person name="Schneider D.J."/>
            <person name="Tang X."/>
            <person name="Bender C.L."/>
            <person name="White O."/>
            <person name="Fraser C.M."/>
            <person name="Collmer A."/>
        </authorList>
    </citation>
    <scope>NUCLEOTIDE SEQUENCE [LARGE SCALE GENOMIC DNA]</scope>
    <source>
        <strain>ATCC BAA-871 / DC3000</strain>
    </source>
</reference>
<feature type="chain" id="PRO_0000346243" description="D-ribose pyranase">
    <location>
        <begin position="1"/>
        <end position="134"/>
    </location>
</feature>
<feature type="active site" description="Proton donor" evidence="1">
    <location>
        <position position="20"/>
    </location>
</feature>
<feature type="binding site" evidence="1">
    <location>
        <position position="28"/>
    </location>
    <ligand>
        <name>substrate</name>
    </ligand>
</feature>
<feature type="binding site" evidence="1">
    <location>
        <position position="101"/>
    </location>
    <ligand>
        <name>substrate</name>
    </ligand>
</feature>
<feature type="binding site" evidence="1">
    <location>
        <begin position="123"/>
        <end position="125"/>
    </location>
    <ligand>
        <name>substrate</name>
    </ligand>
</feature>
<protein>
    <recommendedName>
        <fullName evidence="1">D-ribose pyranase</fullName>
        <ecNumber evidence="1">5.4.99.62</ecNumber>
    </recommendedName>
</protein>